<keyword id="KW-0175">Coiled coil</keyword>
<keyword id="KW-0256">Endoplasmic reticulum</keyword>
<keyword id="KW-0931">ER-Golgi transport</keyword>
<keyword id="KW-0333">Golgi apparatus</keyword>
<keyword id="KW-0472">Membrane</keyword>
<keyword id="KW-0812">Transmembrane</keyword>
<keyword id="KW-1133">Transmembrane helix</keyword>
<keyword id="KW-0813">Transport</keyword>
<comment type="function">
    <text evidence="1">Required for the post-translational delivery of tail-anchored (TA) proteins to the endoplasmic reticulum. Together with GET2, acts as a membrane receptor for soluble GET3, which recognizes and selectively binds the transmembrane domain of TA proteins in the cytosol. The GET complex cooperates with the HDEL receptor ERD2 to mediate the ATP-dependent retrieval of resident ER proteins that contain a C-terminal H-D-E-L retention signal from the Golgi to the ER.</text>
</comment>
<comment type="subunit">
    <text evidence="1">Component of the Golgi to ER traffic (GET) complex, which is composed of GET1, GET2 and GET3. Within the complex, GET1 and GET2 form a heterotetramer which is stabilized by phosphatidylinositol binding and which binds to the GET3 homodimer.</text>
</comment>
<comment type="subcellular location">
    <subcellularLocation>
        <location evidence="1">Endoplasmic reticulum membrane</location>
        <topology evidence="1">Multi-pass membrane protein</topology>
    </subcellularLocation>
    <subcellularLocation>
        <location evidence="1">Golgi apparatus membrane</location>
        <topology evidence="1">Multi-pass membrane protein</topology>
    </subcellularLocation>
</comment>
<comment type="similarity">
    <text evidence="1">Belongs to the WRB/GET1 family.</text>
</comment>
<accession>B9WA88</accession>
<sequence length="199" mass="22889">MLLPDLHPYTILLSIFIVLLLKQLVASIGKSTIKEFVWLVYLKVSSNQSIKTYNSKQHELHETNKEKRAISAQDEYAKWTKLNRQADKLSAELQKLNQEIQQQKASIDKVSNALLLVLTTLPIWVARVLYRNTHLFYIRQGIFPKYVEWVLALPFLPNGAVGLTIWMFAVNSVVSNFAFLVSFPFAKKVSKPVRDTKIE</sequence>
<protein>
    <recommendedName>
        <fullName evidence="1">Golgi to ER traffic protein 1</fullName>
    </recommendedName>
    <alternativeName>
        <fullName evidence="1">Guided entry of tail-anchored proteins 1</fullName>
    </alternativeName>
</protein>
<name>GET1_CANDC</name>
<feature type="chain" id="PRO_0000388584" description="Golgi to ER traffic protein 1">
    <location>
        <begin position="1"/>
        <end position="199"/>
    </location>
</feature>
<feature type="topological domain" description="Lumenal" evidence="1">
    <location>
        <begin position="1"/>
        <end position="11"/>
    </location>
</feature>
<feature type="transmembrane region" description="Helical" evidence="1">
    <location>
        <begin position="12"/>
        <end position="31"/>
    </location>
</feature>
<feature type="topological domain" description="Cytoplasmic" evidence="1">
    <location>
        <begin position="32"/>
        <end position="115"/>
    </location>
</feature>
<feature type="transmembrane region" description="Helical" evidence="1">
    <location>
        <begin position="116"/>
        <end position="136"/>
    </location>
</feature>
<feature type="topological domain" description="Lumenal" evidence="1">
    <location>
        <begin position="137"/>
        <end position="160"/>
    </location>
</feature>
<feature type="transmembrane region" description="Helical" evidence="1">
    <location>
        <begin position="161"/>
        <end position="177"/>
    </location>
</feature>
<feature type="topological domain" description="Cytoplasmic" evidence="1">
    <location>
        <begin position="178"/>
        <end position="199"/>
    </location>
</feature>
<feature type="coiled-coil region" evidence="1">
    <location>
        <begin position="66"/>
        <end position="116"/>
    </location>
</feature>
<organism>
    <name type="scientific">Candida dubliniensis (strain CD36 / ATCC MYA-646 / CBS 7987 / NCPF 3949 / NRRL Y-17841)</name>
    <name type="common">Yeast</name>
    <dbReference type="NCBI Taxonomy" id="573826"/>
    <lineage>
        <taxon>Eukaryota</taxon>
        <taxon>Fungi</taxon>
        <taxon>Dikarya</taxon>
        <taxon>Ascomycota</taxon>
        <taxon>Saccharomycotina</taxon>
        <taxon>Pichiomycetes</taxon>
        <taxon>Debaryomycetaceae</taxon>
        <taxon>Candida/Lodderomyces clade</taxon>
        <taxon>Candida</taxon>
    </lineage>
</organism>
<gene>
    <name evidence="1" type="primary">GET1</name>
    <name type="ORF">CD36_15290</name>
</gene>
<reference key="1">
    <citation type="journal article" date="2009" name="Genome Res.">
        <title>Comparative genomics of the fungal pathogens Candida dubliniensis and Candida albicans.</title>
        <authorList>
            <person name="Jackson A.P."/>
            <person name="Gamble J.A."/>
            <person name="Yeomans T."/>
            <person name="Moran G.P."/>
            <person name="Saunders D."/>
            <person name="Harris D."/>
            <person name="Aslett M."/>
            <person name="Barrell J.F."/>
            <person name="Butler G."/>
            <person name="Citiulo F."/>
            <person name="Coleman D.C."/>
            <person name="de Groot P.W.J."/>
            <person name="Goodwin T.J."/>
            <person name="Quail M.A."/>
            <person name="McQuillan J."/>
            <person name="Munro C.A."/>
            <person name="Pain A."/>
            <person name="Poulter R.T."/>
            <person name="Rajandream M.A."/>
            <person name="Renauld H."/>
            <person name="Spiering M.J."/>
            <person name="Tivey A."/>
            <person name="Gow N.A.R."/>
            <person name="Barrell B."/>
            <person name="Sullivan D.J."/>
            <person name="Berriman M."/>
        </authorList>
    </citation>
    <scope>NUCLEOTIDE SEQUENCE [LARGE SCALE GENOMIC DNA]</scope>
    <source>
        <strain>CD36 / ATCC MYA-646 / CBS 7987 / NCPF 3949 / NRRL Y-17841</strain>
    </source>
</reference>
<proteinExistence type="inferred from homology"/>
<dbReference type="EMBL" id="FM992689">
    <property type="protein sequence ID" value="CAX43307.1"/>
    <property type="molecule type" value="Genomic_DNA"/>
</dbReference>
<dbReference type="RefSeq" id="XP_002418008.1">
    <property type="nucleotide sequence ID" value="XM_002417963.1"/>
</dbReference>
<dbReference type="SMR" id="B9WA88"/>
<dbReference type="GeneID" id="8045589"/>
<dbReference type="KEGG" id="cdu:CD36_15290"/>
<dbReference type="CGD" id="CAL0000167744">
    <property type="gene designation" value="Cd36_15290"/>
</dbReference>
<dbReference type="VEuPathDB" id="FungiDB:CD36_15290"/>
<dbReference type="eggNOG" id="KOG4253">
    <property type="taxonomic scope" value="Eukaryota"/>
</dbReference>
<dbReference type="HOGENOM" id="CLU_089418_2_0_1"/>
<dbReference type="OrthoDB" id="69461at2759"/>
<dbReference type="Proteomes" id="UP000002605">
    <property type="component" value="Chromosome 2"/>
</dbReference>
<dbReference type="GO" id="GO:0005789">
    <property type="term" value="C:endoplasmic reticulum membrane"/>
    <property type="evidence" value="ECO:0007669"/>
    <property type="project" value="UniProtKB-SubCell"/>
</dbReference>
<dbReference type="GO" id="GO:0043529">
    <property type="term" value="C:GET complex"/>
    <property type="evidence" value="ECO:0007669"/>
    <property type="project" value="UniProtKB-UniRule"/>
</dbReference>
<dbReference type="GO" id="GO:0000139">
    <property type="term" value="C:Golgi membrane"/>
    <property type="evidence" value="ECO:0007669"/>
    <property type="project" value="UniProtKB-SubCell"/>
</dbReference>
<dbReference type="GO" id="GO:0043495">
    <property type="term" value="F:protein-membrane adaptor activity"/>
    <property type="evidence" value="ECO:0007669"/>
    <property type="project" value="TreeGrafter"/>
</dbReference>
<dbReference type="GO" id="GO:0071816">
    <property type="term" value="P:tail-anchored membrane protein insertion into ER membrane"/>
    <property type="evidence" value="ECO:0007669"/>
    <property type="project" value="InterPro"/>
</dbReference>
<dbReference type="GO" id="GO:0016192">
    <property type="term" value="P:vesicle-mediated transport"/>
    <property type="evidence" value="ECO:0007669"/>
    <property type="project" value="UniProtKB-KW"/>
</dbReference>
<dbReference type="FunFam" id="1.10.287.660:FF:000006">
    <property type="entry name" value="Protein GET1"/>
    <property type="match status" value="1"/>
</dbReference>
<dbReference type="Gene3D" id="1.10.287.660">
    <property type="entry name" value="Helix hairpin bin"/>
    <property type="match status" value="1"/>
</dbReference>
<dbReference type="HAMAP" id="MF_03113">
    <property type="entry name" value="Get1"/>
    <property type="match status" value="1"/>
</dbReference>
<dbReference type="InterPro" id="IPR028945">
    <property type="entry name" value="Get1"/>
</dbReference>
<dbReference type="InterPro" id="IPR027538">
    <property type="entry name" value="Get1_fungi"/>
</dbReference>
<dbReference type="InterPro" id="IPR029012">
    <property type="entry name" value="Helix_hairpin_bin_sf"/>
</dbReference>
<dbReference type="PANTHER" id="PTHR42650:SF1">
    <property type="entry name" value="GUIDED ENTRY OF TAIL-ANCHORED PROTEINS FACTOR 1"/>
    <property type="match status" value="1"/>
</dbReference>
<dbReference type="PANTHER" id="PTHR42650">
    <property type="entry name" value="TAIL-ANCHORED PROTEIN INSERTION RECEPTOR WRB"/>
    <property type="match status" value="1"/>
</dbReference>
<dbReference type="Pfam" id="PF04420">
    <property type="entry name" value="CHD5"/>
    <property type="match status" value="1"/>
</dbReference>
<evidence type="ECO:0000255" key="1">
    <source>
        <dbReference type="HAMAP-Rule" id="MF_03113"/>
    </source>
</evidence>